<comment type="similarity">
    <text evidence="3">Belongs to the OPA3 family.</text>
</comment>
<accession>Q9P7W0</accession>
<gene>
    <name type="ORF">SPBC1703.11</name>
</gene>
<feature type="chain" id="PRO_0000220766" description="OPA3-like protein">
    <location>
        <begin position="1"/>
        <end position="218"/>
    </location>
</feature>
<feature type="region of interest" description="Disordered" evidence="2">
    <location>
        <begin position="175"/>
        <end position="218"/>
    </location>
</feature>
<feature type="coiled-coil region" evidence="1">
    <location>
        <begin position="129"/>
        <end position="179"/>
    </location>
</feature>
<feature type="compositionally biased region" description="Polar residues" evidence="2">
    <location>
        <begin position="176"/>
        <end position="189"/>
    </location>
</feature>
<feature type="compositionally biased region" description="Basic and acidic residues" evidence="2">
    <location>
        <begin position="194"/>
        <end position="206"/>
    </location>
</feature>
<feature type="compositionally biased region" description="Polar residues" evidence="2">
    <location>
        <begin position="208"/>
        <end position="218"/>
    </location>
</feature>
<protein>
    <recommendedName>
        <fullName>OPA3-like protein</fullName>
    </recommendedName>
</protein>
<reference key="1">
    <citation type="journal article" date="2002" name="Nature">
        <title>The genome sequence of Schizosaccharomyces pombe.</title>
        <authorList>
            <person name="Wood V."/>
            <person name="Gwilliam R."/>
            <person name="Rajandream M.A."/>
            <person name="Lyne M.H."/>
            <person name="Lyne R."/>
            <person name="Stewart A."/>
            <person name="Sgouros J.G."/>
            <person name="Peat N."/>
            <person name="Hayles J."/>
            <person name="Baker S.G."/>
            <person name="Basham D."/>
            <person name="Bowman S."/>
            <person name="Brooks K."/>
            <person name="Brown D."/>
            <person name="Brown S."/>
            <person name="Chillingworth T."/>
            <person name="Churcher C.M."/>
            <person name="Collins M."/>
            <person name="Connor R."/>
            <person name="Cronin A."/>
            <person name="Davis P."/>
            <person name="Feltwell T."/>
            <person name="Fraser A."/>
            <person name="Gentles S."/>
            <person name="Goble A."/>
            <person name="Hamlin N."/>
            <person name="Harris D.E."/>
            <person name="Hidalgo J."/>
            <person name="Hodgson G."/>
            <person name="Holroyd S."/>
            <person name="Hornsby T."/>
            <person name="Howarth S."/>
            <person name="Huckle E.J."/>
            <person name="Hunt S."/>
            <person name="Jagels K."/>
            <person name="James K.D."/>
            <person name="Jones L."/>
            <person name="Jones M."/>
            <person name="Leather S."/>
            <person name="McDonald S."/>
            <person name="McLean J."/>
            <person name="Mooney P."/>
            <person name="Moule S."/>
            <person name="Mungall K.L."/>
            <person name="Murphy L.D."/>
            <person name="Niblett D."/>
            <person name="Odell C."/>
            <person name="Oliver K."/>
            <person name="O'Neil S."/>
            <person name="Pearson D."/>
            <person name="Quail M.A."/>
            <person name="Rabbinowitsch E."/>
            <person name="Rutherford K.M."/>
            <person name="Rutter S."/>
            <person name="Saunders D."/>
            <person name="Seeger K."/>
            <person name="Sharp S."/>
            <person name="Skelton J."/>
            <person name="Simmonds M.N."/>
            <person name="Squares R."/>
            <person name="Squares S."/>
            <person name="Stevens K."/>
            <person name="Taylor K."/>
            <person name="Taylor R.G."/>
            <person name="Tivey A."/>
            <person name="Walsh S.V."/>
            <person name="Warren T."/>
            <person name="Whitehead S."/>
            <person name="Woodward J.R."/>
            <person name="Volckaert G."/>
            <person name="Aert R."/>
            <person name="Robben J."/>
            <person name="Grymonprez B."/>
            <person name="Weltjens I."/>
            <person name="Vanstreels E."/>
            <person name="Rieger M."/>
            <person name="Schaefer M."/>
            <person name="Mueller-Auer S."/>
            <person name="Gabel C."/>
            <person name="Fuchs M."/>
            <person name="Duesterhoeft A."/>
            <person name="Fritzc C."/>
            <person name="Holzer E."/>
            <person name="Moestl D."/>
            <person name="Hilbert H."/>
            <person name="Borzym K."/>
            <person name="Langer I."/>
            <person name="Beck A."/>
            <person name="Lehrach H."/>
            <person name="Reinhardt R."/>
            <person name="Pohl T.M."/>
            <person name="Eger P."/>
            <person name="Zimmermann W."/>
            <person name="Wedler H."/>
            <person name="Wambutt R."/>
            <person name="Purnelle B."/>
            <person name="Goffeau A."/>
            <person name="Cadieu E."/>
            <person name="Dreano S."/>
            <person name="Gloux S."/>
            <person name="Lelaure V."/>
            <person name="Mottier S."/>
            <person name="Galibert F."/>
            <person name="Aves S.J."/>
            <person name="Xiang Z."/>
            <person name="Hunt C."/>
            <person name="Moore K."/>
            <person name="Hurst S.M."/>
            <person name="Lucas M."/>
            <person name="Rochet M."/>
            <person name="Gaillardin C."/>
            <person name="Tallada V.A."/>
            <person name="Garzon A."/>
            <person name="Thode G."/>
            <person name="Daga R.R."/>
            <person name="Cruzado L."/>
            <person name="Jimenez J."/>
            <person name="Sanchez M."/>
            <person name="del Rey F."/>
            <person name="Benito J."/>
            <person name="Dominguez A."/>
            <person name="Revuelta J.L."/>
            <person name="Moreno S."/>
            <person name="Armstrong J."/>
            <person name="Forsburg S.L."/>
            <person name="Cerutti L."/>
            <person name="Lowe T."/>
            <person name="McCombie W.R."/>
            <person name="Paulsen I."/>
            <person name="Potashkin J."/>
            <person name="Shpakovski G.V."/>
            <person name="Ussery D."/>
            <person name="Barrell B.G."/>
            <person name="Nurse P."/>
        </authorList>
    </citation>
    <scope>NUCLEOTIDE SEQUENCE [LARGE SCALE GENOMIC DNA]</scope>
    <source>
        <strain>972 / ATCC 24843</strain>
    </source>
</reference>
<proteinExistence type="inferred from homology"/>
<organism>
    <name type="scientific">Schizosaccharomyces pombe (strain 972 / ATCC 24843)</name>
    <name type="common">Fission yeast</name>
    <dbReference type="NCBI Taxonomy" id="284812"/>
    <lineage>
        <taxon>Eukaryota</taxon>
        <taxon>Fungi</taxon>
        <taxon>Dikarya</taxon>
        <taxon>Ascomycota</taxon>
        <taxon>Taphrinomycotina</taxon>
        <taxon>Schizosaccharomycetes</taxon>
        <taxon>Schizosaccharomycetales</taxon>
        <taxon>Schizosaccharomycetaceae</taxon>
        <taxon>Schizosaccharomyces</taxon>
    </lineage>
</organism>
<keyword id="KW-0175">Coiled coil</keyword>
<keyword id="KW-1185">Reference proteome</keyword>
<dbReference type="EMBL" id="CU329671">
    <property type="protein sequence ID" value="CAB66455.1"/>
    <property type="molecule type" value="Genomic_DNA"/>
</dbReference>
<dbReference type="PIR" id="T50324">
    <property type="entry name" value="T50324"/>
</dbReference>
<dbReference type="SMR" id="Q9P7W0"/>
<dbReference type="BioGRID" id="276503">
    <property type="interactions" value="16"/>
</dbReference>
<dbReference type="FunCoup" id="Q9P7W0">
    <property type="interactions" value="313"/>
</dbReference>
<dbReference type="STRING" id="284812.Q9P7W0"/>
<dbReference type="PaxDb" id="4896-SPBC1703.11.1"/>
<dbReference type="EnsemblFungi" id="SPBC1703.11.1">
    <property type="protein sequence ID" value="SPBC1703.11.1:pep"/>
    <property type="gene ID" value="SPBC1703.11"/>
</dbReference>
<dbReference type="KEGG" id="spo:2539959"/>
<dbReference type="PomBase" id="SPBC1703.11"/>
<dbReference type="VEuPathDB" id="FungiDB:SPBC1703.11"/>
<dbReference type="eggNOG" id="KOG3335">
    <property type="taxonomic scope" value="Eukaryota"/>
</dbReference>
<dbReference type="HOGENOM" id="CLU_074707_3_1_1"/>
<dbReference type="InParanoid" id="Q9P7W0"/>
<dbReference type="OMA" id="CIDFAQM"/>
<dbReference type="PhylomeDB" id="Q9P7W0"/>
<dbReference type="PRO" id="PR:Q9P7W0"/>
<dbReference type="Proteomes" id="UP000002485">
    <property type="component" value="Chromosome II"/>
</dbReference>
<dbReference type="GO" id="GO:0005737">
    <property type="term" value="C:cytoplasm"/>
    <property type="evidence" value="ECO:0007005"/>
    <property type="project" value="PomBase"/>
</dbReference>
<dbReference type="GO" id="GO:0005741">
    <property type="term" value="C:mitochondrial outer membrane"/>
    <property type="evidence" value="ECO:0000304"/>
    <property type="project" value="PomBase"/>
</dbReference>
<dbReference type="GO" id="GO:0005739">
    <property type="term" value="C:mitochondrion"/>
    <property type="evidence" value="ECO:0000318"/>
    <property type="project" value="GO_Central"/>
</dbReference>
<dbReference type="GO" id="GO:0019216">
    <property type="term" value="P:regulation of lipid metabolic process"/>
    <property type="evidence" value="ECO:0000318"/>
    <property type="project" value="GO_Central"/>
</dbReference>
<dbReference type="InterPro" id="IPR010754">
    <property type="entry name" value="OPA3-like"/>
</dbReference>
<dbReference type="PANTHER" id="PTHR12499:SF0">
    <property type="entry name" value="OPTIC ATROPHY 3 PROTEIN"/>
    <property type="match status" value="1"/>
</dbReference>
<dbReference type="PANTHER" id="PTHR12499">
    <property type="entry name" value="OPTIC ATROPHY 3 PROTEIN OPA3"/>
    <property type="match status" value="1"/>
</dbReference>
<dbReference type="Pfam" id="PF07047">
    <property type="entry name" value="OPA3"/>
    <property type="match status" value="1"/>
</dbReference>
<evidence type="ECO:0000255" key="1"/>
<evidence type="ECO:0000256" key="2">
    <source>
        <dbReference type="SAM" id="MobiDB-lite"/>
    </source>
</evidence>
<evidence type="ECO:0000305" key="3"/>
<name>OPA3_SCHPO</name>
<sequence length="218" mass="24545">MSSLALKIGSLLVRTLSKPIANTIKAQAKEHKAFRKACIEFAQWMHRAEFRITGINRAKSGGANVRLRPLNDAKAVDAGATFLSETFIFTVAGGAILFETWRARRKEKNRRDEVAEAILGLQHEIVRINEIMEKQFVLQKKKNELQSSTEEIDSTEKDFDELHKVILKVERELHTLRQNTPSQNEQAEATPSKEIPRETVSEKADHPPSSNTKSVSTG</sequence>